<sequence length="270" mass="30068">MTARDFLEFRERLAPASGFQSAQLREIEILLGLEDTQRISIGNGCSYRDALKLPGGAPSSSAQRVEARAADGPSFKHCLYDWLSRVPIDGSNAPADITRFLEAYLASLRAENDRRLKLASSGLAAAEIEQLRARYAAEDAGAQAFLLAEDDPQASDAERETRRAGRAAMLFIESYRELPQLAWPHALLESVLELEQAMLIWRQRHARMVERFIGRRIGTGGSSGVDYLDQTARYRIFTELWTVRSLLLRKAAVPQIRSSAGYGFVMEGFA</sequence>
<organism>
    <name type="scientific">Xanthomonas campestris pv. campestris (strain ATCC 33913 / DSM 3586 / NCPPB 528 / LMG 568 / P 25)</name>
    <dbReference type="NCBI Taxonomy" id="190485"/>
    <lineage>
        <taxon>Bacteria</taxon>
        <taxon>Pseudomonadati</taxon>
        <taxon>Pseudomonadota</taxon>
        <taxon>Gammaproteobacteria</taxon>
        <taxon>Lysobacterales</taxon>
        <taxon>Lysobacteraceae</taxon>
        <taxon>Xanthomonas</taxon>
    </lineage>
</organism>
<accession>Q8PBB3</accession>
<comment type="similarity">
    <text evidence="1">Belongs to the tryptophan 2,3-dioxygenase family.</text>
</comment>
<feature type="chain" id="PRO_0000360979" description="Tryptophan 2,3-dioxygenase-like protein">
    <location>
        <begin position="1"/>
        <end position="270"/>
    </location>
</feature>
<proteinExistence type="inferred from homology"/>
<evidence type="ECO:0000305" key="1"/>
<protein>
    <recommendedName>
        <fullName>Tryptophan 2,3-dioxygenase-like protein</fullName>
        <shortName>TO-like protein</shortName>
    </recommendedName>
    <alternativeName>
        <fullName>Tryptamin 2,3-dioxygenase-like protein</fullName>
        <shortName>TRPO-like protein</shortName>
    </alternativeName>
    <alternativeName>
        <fullName>Tryptophan oxygenase-like protein</fullName>
    </alternativeName>
    <alternativeName>
        <fullName>Tryptophan pyrrolase-like protein</fullName>
    </alternativeName>
    <alternativeName>
        <fullName>Tryptophanase-like protein</fullName>
    </alternativeName>
</protein>
<reference key="1">
    <citation type="journal article" date="2002" name="Nature">
        <title>Comparison of the genomes of two Xanthomonas pathogens with differing host specificities.</title>
        <authorList>
            <person name="da Silva A.C.R."/>
            <person name="Ferro J.A."/>
            <person name="Reinach F.C."/>
            <person name="Farah C.S."/>
            <person name="Furlan L.R."/>
            <person name="Quaggio R.B."/>
            <person name="Monteiro-Vitorello C.B."/>
            <person name="Van Sluys M.A."/>
            <person name="Almeida N.F. Jr."/>
            <person name="Alves L.M.C."/>
            <person name="do Amaral A.M."/>
            <person name="Bertolini M.C."/>
            <person name="Camargo L.E.A."/>
            <person name="Camarotte G."/>
            <person name="Cannavan F."/>
            <person name="Cardozo J."/>
            <person name="Chambergo F."/>
            <person name="Ciapina L.P."/>
            <person name="Cicarelli R.M.B."/>
            <person name="Coutinho L.L."/>
            <person name="Cursino-Santos J.R."/>
            <person name="El-Dorry H."/>
            <person name="Faria J.B."/>
            <person name="Ferreira A.J.S."/>
            <person name="Ferreira R.C.C."/>
            <person name="Ferro M.I.T."/>
            <person name="Formighieri E.F."/>
            <person name="Franco M.C."/>
            <person name="Greggio C.C."/>
            <person name="Gruber A."/>
            <person name="Katsuyama A.M."/>
            <person name="Kishi L.T."/>
            <person name="Leite R.P."/>
            <person name="Lemos E.G.M."/>
            <person name="Lemos M.V.F."/>
            <person name="Locali E.C."/>
            <person name="Machado M.A."/>
            <person name="Madeira A.M.B.N."/>
            <person name="Martinez-Rossi N.M."/>
            <person name="Martins E.C."/>
            <person name="Meidanis J."/>
            <person name="Menck C.F.M."/>
            <person name="Miyaki C.Y."/>
            <person name="Moon D.H."/>
            <person name="Moreira L.M."/>
            <person name="Novo M.T.M."/>
            <person name="Okura V.K."/>
            <person name="Oliveira M.C."/>
            <person name="Oliveira V.R."/>
            <person name="Pereira H.A."/>
            <person name="Rossi A."/>
            <person name="Sena J.A.D."/>
            <person name="Silva C."/>
            <person name="de Souza R.F."/>
            <person name="Spinola L.A.F."/>
            <person name="Takita M.A."/>
            <person name="Tamura R.E."/>
            <person name="Teixeira E.C."/>
            <person name="Tezza R.I.D."/>
            <person name="Trindade dos Santos M."/>
            <person name="Truffi D."/>
            <person name="Tsai S.M."/>
            <person name="White F.F."/>
            <person name="Setubal J.C."/>
            <person name="Kitajima J.P."/>
        </authorList>
    </citation>
    <scope>NUCLEOTIDE SEQUENCE [LARGE SCALE GENOMIC DNA]</scope>
    <source>
        <strain>ATCC 33913 / DSM 3586 / NCPPB 528 / LMG 568 / P 25</strain>
    </source>
</reference>
<name>T23OL_XANCP</name>
<keyword id="KW-1185">Reference proteome</keyword>
<gene>
    <name type="ordered locus">XCC1210</name>
</gene>
<dbReference type="EMBL" id="AE008922">
    <property type="protein sequence ID" value="AAM40508.1"/>
    <property type="molecule type" value="Genomic_DNA"/>
</dbReference>
<dbReference type="RefSeq" id="NP_636584.1">
    <property type="nucleotide sequence ID" value="NC_003902.1"/>
</dbReference>
<dbReference type="RefSeq" id="WP_011036406.1">
    <property type="nucleotide sequence ID" value="NC_003902.1"/>
</dbReference>
<dbReference type="SMR" id="Q8PBB3"/>
<dbReference type="STRING" id="190485.XCC1210"/>
<dbReference type="EnsemblBacteria" id="AAM40508">
    <property type="protein sequence ID" value="AAM40508"/>
    <property type="gene ID" value="XCC1210"/>
</dbReference>
<dbReference type="KEGG" id="xcc:XCC1210"/>
<dbReference type="PATRIC" id="fig|190485.4.peg.1301"/>
<dbReference type="HOGENOM" id="CLU_045599_1_1_6"/>
<dbReference type="OrthoDB" id="9776847at2"/>
<dbReference type="Proteomes" id="UP000001010">
    <property type="component" value="Chromosome"/>
</dbReference>
<dbReference type="GO" id="GO:0020037">
    <property type="term" value="F:heme binding"/>
    <property type="evidence" value="ECO:0007669"/>
    <property type="project" value="InterPro"/>
</dbReference>
<dbReference type="GO" id="GO:0046872">
    <property type="term" value="F:metal ion binding"/>
    <property type="evidence" value="ECO:0007669"/>
    <property type="project" value="InterPro"/>
</dbReference>
<dbReference type="GO" id="GO:0004833">
    <property type="term" value="F:tryptophan 2,3-dioxygenase activity"/>
    <property type="evidence" value="ECO:0007669"/>
    <property type="project" value="InterPro"/>
</dbReference>
<dbReference type="GO" id="GO:0019441">
    <property type="term" value="P:L-tryptophan catabolic process to kynurenine"/>
    <property type="evidence" value="ECO:0007669"/>
    <property type="project" value="InterPro"/>
</dbReference>
<dbReference type="Gene3D" id="1.20.58.480">
    <property type="match status" value="1"/>
</dbReference>
<dbReference type="InterPro" id="IPR037217">
    <property type="entry name" value="Trp/Indoleamine_2_3_dOase-like"/>
</dbReference>
<dbReference type="InterPro" id="IPR004981">
    <property type="entry name" value="Trp_2_3_dOase"/>
</dbReference>
<dbReference type="PANTHER" id="PTHR10138">
    <property type="entry name" value="TRYPTOPHAN 2,3-DIOXYGENASE"/>
    <property type="match status" value="1"/>
</dbReference>
<dbReference type="PANTHER" id="PTHR10138:SF0">
    <property type="entry name" value="TRYPTOPHAN 2,3-DIOXYGENASE"/>
    <property type="match status" value="1"/>
</dbReference>
<dbReference type="Pfam" id="PF03301">
    <property type="entry name" value="Trp_dioxygenase"/>
    <property type="match status" value="1"/>
</dbReference>
<dbReference type="SUPFAM" id="SSF140959">
    <property type="entry name" value="Indolic compounds 2,3-dioxygenase-like"/>
    <property type="match status" value="1"/>
</dbReference>